<protein>
    <recommendedName>
        <fullName>Zinc finger CCCH domain-containing protein 55</fullName>
        <shortName>AtC3H55</shortName>
    </recommendedName>
</protein>
<feature type="chain" id="PRO_0000372008" description="Zinc finger CCCH domain-containing protein 55">
    <location>
        <begin position="1"/>
        <end position="650"/>
    </location>
</feature>
<feature type="domain" description="RRM" evidence="1">
    <location>
        <begin position="357"/>
        <end position="433"/>
    </location>
</feature>
<feature type="zinc finger region" description="C3H1-type" evidence="2">
    <location>
        <begin position="232"/>
        <end position="254"/>
    </location>
</feature>
<feature type="region of interest" description="Disordered" evidence="3">
    <location>
        <begin position="67"/>
        <end position="162"/>
    </location>
</feature>
<feature type="region of interest" description="Disordered" evidence="3">
    <location>
        <begin position="566"/>
        <end position="650"/>
    </location>
</feature>
<feature type="compositionally biased region" description="Low complexity" evidence="3">
    <location>
        <begin position="105"/>
        <end position="128"/>
    </location>
</feature>
<feature type="compositionally biased region" description="Polar residues" evidence="3">
    <location>
        <begin position="141"/>
        <end position="154"/>
    </location>
</feature>
<feature type="compositionally biased region" description="Basic and acidic residues" evidence="3">
    <location>
        <begin position="581"/>
        <end position="590"/>
    </location>
</feature>
<dbReference type="EMBL" id="AL592312">
    <property type="protein sequence ID" value="CAC42905.1"/>
    <property type="status" value="ALT_SEQ"/>
    <property type="molecule type" value="Genomic_DNA"/>
</dbReference>
<dbReference type="EMBL" id="CP002688">
    <property type="protein sequence ID" value="AED91809.1"/>
    <property type="molecule type" value="Genomic_DNA"/>
</dbReference>
<dbReference type="EMBL" id="CP002688">
    <property type="protein sequence ID" value="AED91810.1"/>
    <property type="molecule type" value="Genomic_DNA"/>
</dbReference>
<dbReference type="EMBL" id="CP002688">
    <property type="protein sequence ID" value="ANM70452.1"/>
    <property type="molecule type" value="Genomic_DNA"/>
</dbReference>
<dbReference type="EMBL" id="CP002688">
    <property type="protein sequence ID" value="ANM70453.1"/>
    <property type="molecule type" value="Genomic_DNA"/>
</dbReference>
<dbReference type="EMBL" id="CP002688">
    <property type="protein sequence ID" value="ANM70455.1"/>
    <property type="molecule type" value="Genomic_DNA"/>
</dbReference>
<dbReference type="EMBL" id="CP002688">
    <property type="protein sequence ID" value="ANM70457.1"/>
    <property type="molecule type" value="Genomic_DNA"/>
</dbReference>
<dbReference type="EMBL" id="CP002688">
    <property type="protein sequence ID" value="ANM70460.1"/>
    <property type="molecule type" value="Genomic_DNA"/>
</dbReference>
<dbReference type="EMBL" id="AK119121">
    <property type="protein sequence ID" value="BAC43691.1"/>
    <property type="molecule type" value="mRNA"/>
</dbReference>
<dbReference type="EMBL" id="BT002509">
    <property type="protein sequence ID" value="AAO00869.1"/>
    <property type="molecule type" value="mRNA"/>
</dbReference>
<dbReference type="RefSeq" id="NP_001190296.1">
    <property type="nucleotide sequence ID" value="NM_001203367.1"/>
</dbReference>
<dbReference type="RefSeq" id="NP_001318550.1">
    <property type="nucleotide sequence ID" value="NM_001343240.1"/>
</dbReference>
<dbReference type="RefSeq" id="NP_001332061.1">
    <property type="nucleotide sequence ID" value="NM_001343239.1"/>
</dbReference>
<dbReference type="RefSeq" id="NP_001332063.1">
    <property type="nucleotide sequence ID" value="NM_001343247.1"/>
</dbReference>
<dbReference type="RefSeq" id="NP_001332065.1">
    <property type="nucleotide sequence ID" value="NM_001343245.1"/>
</dbReference>
<dbReference type="RefSeq" id="NP_001332068.1">
    <property type="nucleotide sequence ID" value="NM_001343242.1"/>
</dbReference>
<dbReference type="RefSeq" id="NP_568277.5">
    <property type="nucleotide sequence ID" value="NM_121282.6"/>
</dbReference>
<dbReference type="SMR" id="Q94CJ8"/>
<dbReference type="FunCoup" id="Q94CJ8">
    <property type="interactions" value="872"/>
</dbReference>
<dbReference type="STRING" id="3702.Q94CJ8"/>
<dbReference type="GlyGen" id="Q94CJ8">
    <property type="glycosylation" value="1 site, 1 O-linked glycan (1 site)"/>
</dbReference>
<dbReference type="iPTMnet" id="Q94CJ8"/>
<dbReference type="PaxDb" id="3702-AT5G12440.1"/>
<dbReference type="ProteomicsDB" id="239159"/>
<dbReference type="EnsemblPlants" id="AT5G12440.1">
    <property type="protein sequence ID" value="AT5G12440.1"/>
    <property type="gene ID" value="AT5G12440"/>
</dbReference>
<dbReference type="EnsemblPlants" id="AT5G12440.11">
    <property type="protein sequence ID" value="AT5G12440.11"/>
    <property type="gene ID" value="AT5G12440"/>
</dbReference>
<dbReference type="EnsemblPlants" id="AT5G12440.12">
    <property type="protein sequence ID" value="AT5G12440.12"/>
    <property type="gene ID" value="AT5G12440"/>
</dbReference>
<dbReference type="EnsemblPlants" id="AT5G12440.2">
    <property type="protein sequence ID" value="AT5G12440.2"/>
    <property type="gene ID" value="AT5G12440"/>
</dbReference>
<dbReference type="EnsemblPlants" id="AT5G12440.4">
    <property type="protein sequence ID" value="AT5G12440.4"/>
    <property type="gene ID" value="AT5G12440"/>
</dbReference>
<dbReference type="EnsemblPlants" id="AT5G12440.7">
    <property type="protein sequence ID" value="AT5G12440.7"/>
    <property type="gene ID" value="AT5G12440"/>
</dbReference>
<dbReference type="EnsemblPlants" id="AT5G12440.9">
    <property type="protein sequence ID" value="AT5G12440.9"/>
    <property type="gene ID" value="AT5G12440"/>
</dbReference>
<dbReference type="GeneID" id="831119"/>
<dbReference type="Gramene" id="AT5G12440.1">
    <property type="protein sequence ID" value="AT5G12440.1"/>
    <property type="gene ID" value="AT5G12440"/>
</dbReference>
<dbReference type="Gramene" id="AT5G12440.11">
    <property type="protein sequence ID" value="AT5G12440.11"/>
    <property type="gene ID" value="AT5G12440"/>
</dbReference>
<dbReference type="Gramene" id="AT5G12440.12">
    <property type="protein sequence ID" value="AT5G12440.12"/>
    <property type="gene ID" value="AT5G12440"/>
</dbReference>
<dbReference type="Gramene" id="AT5G12440.2">
    <property type="protein sequence ID" value="AT5G12440.2"/>
    <property type="gene ID" value="AT5G12440"/>
</dbReference>
<dbReference type="Gramene" id="AT5G12440.4">
    <property type="protein sequence ID" value="AT5G12440.4"/>
    <property type="gene ID" value="AT5G12440"/>
</dbReference>
<dbReference type="Gramene" id="AT5G12440.7">
    <property type="protein sequence ID" value="AT5G12440.7"/>
    <property type="gene ID" value="AT5G12440"/>
</dbReference>
<dbReference type="Gramene" id="AT5G12440.9">
    <property type="protein sequence ID" value="AT5G12440.9"/>
    <property type="gene ID" value="AT5G12440"/>
</dbReference>
<dbReference type="KEGG" id="ath:AT5G12440"/>
<dbReference type="Araport" id="AT5G12440"/>
<dbReference type="TAIR" id="AT5G12440"/>
<dbReference type="eggNOG" id="ENOG502QSSE">
    <property type="taxonomic scope" value="Eukaryota"/>
</dbReference>
<dbReference type="HOGENOM" id="CLU_028778_0_0_1"/>
<dbReference type="InParanoid" id="Q94CJ8"/>
<dbReference type="OMA" id="PWSINGD"/>
<dbReference type="OrthoDB" id="1897736at2759"/>
<dbReference type="PRO" id="PR:Q94CJ8"/>
<dbReference type="Proteomes" id="UP000006548">
    <property type="component" value="Chromosome 5"/>
</dbReference>
<dbReference type="ExpressionAtlas" id="Q94CJ8">
    <property type="expression patterns" value="baseline and differential"/>
</dbReference>
<dbReference type="GO" id="GO:0003677">
    <property type="term" value="F:DNA binding"/>
    <property type="evidence" value="ECO:0007669"/>
    <property type="project" value="UniProtKB-KW"/>
</dbReference>
<dbReference type="GO" id="GO:0003723">
    <property type="term" value="F:RNA binding"/>
    <property type="evidence" value="ECO:0007669"/>
    <property type="project" value="UniProtKB-KW"/>
</dbReference>
<dbReference type="GO" id="GO:0008270">
    <property type="term" value="F:zinc ion binding"/>
    <property type="evidence" value="ECO:0007669"/>
    <property type="project" value="UniProtKB-KW"/>
</dbReference>
<dbReference type="CDD" id="cd12458">
    <property type="entry name" value="RRM_AtC3H46_like"/>
    <property type="match status" value="1"/>
</dbReference>
<dbReference type="FunFam" id="3.30.70.330:FF:000678">
    <property type="entry name" value="zinc finger CCCH domain-containing protein 53-like isoform X2"/>
    <property type="match status" value="1"/>
</dbReference>
<dbReference type="Gene3D" id="3.30.70.330">
    <property type="match status" value="1"/>
</dbReference>
<dbReference type="Gene3D" id="4.10.1000.10">
    <property type="entry name" value="Zinc finger, CCCH-type"/>
    <property type="match status" value="1"/>
</dbReference>
<dbReference type="InterPro" id="IPR056276">
    <property type="entry name" value="AtC3H46-like_PABC-like"/>
</dbReference>
<dbReference type="InterPro" id="IPR034365">
    <property type="entry name" value="AtC3H46-like_RRM"/>
</dbReference>
<dbReference type="InterPro" id="IPR012677">
    <property type="entry name" value="Nucleotide-bd_a/b_plait_sf"/>
</dbReference>
<dbReference type="InterPro" id="IPR035979">
    <property type="entry name" value="RBD_domain_sf"/>
</dbReference>
<dbReference type="InterPro" id="IPR000504">
    <property type="entry name" value="RRM_dom"/>
</dbReference>
<dbReference type="InterPro" id="IPR000571">
    <property type="entry name" value="Znf_CCCH"/>
</dbReference>
<dbReference type="PANTHER" id="PTHR24009">
    <property type="entry name" value="RNA-BINDING (RRM/RBD/RNP MOTIFS)"/>
    <property type="match status" value="1"/>
</dbReference>
<dbReference type="PANTHER" id="PTHR24009:SF41">
    <property type="entry name" value="ZINC FINGER CCCH DOMAIN-CONTAINING PROTEIN 55"/>
    <property type="match status" value="1"/>
</dbReference>
<dbReference type="Pfam" id="PF23182">
    <property type="entry name" value="PABC_AtC3H46"/>
    <property type="match status" value="1"/>
</dbReference>
<dbReference type="Pfam" id="PF00076">
    <property type="entry name" value="RRM_1"/>
    <property type="match status" value="1"/>
</dbReference>
<dbReference type="Pfam" id="PF00642">
    <property type="entry name" value="zf-CCCH"/>
    <property type="match status" value="1"/>
</dbReference>
<dbReference type="SMART" id="SM00360">
    <property type="entry name" value="RRM"/>
    <property type="match status" value="1"/>
</dbReference>
<dbReference type="SUPFAM" id="SSF54928">
    <property type="entry name" value="RNA-binding domain, RBD"/>
    <property type="match status" value="1"/>
</dbReference>
<dbReference type="PROSITE" id="PS50102">
    <property type="entry name" value="RRM"/>
    <property type="match status" value="1"/>
</dbReference>
<dbReference type="PROSITE" id="PS50103">
    <property type="entry name" value="ZF_C3H1"/>
    <property type="match status" value="1"/>
</dbReference>
<gene>
    <name type="ordered locus">At5g12440</name>
    <name type="ORF">T2L20</name>
</gene>
<reference key="1">
    <citation type="journal article" date="2000" name="Nature">
        <title>Sequence and analysis of chromosome 5 of the plant Arabidopsis thaliana.</title>
        <authorList>
            <person name="Tabata S."/>
            <person name="Kaneko T."/>
            <person name="Nakamura Y."/>
            <person name="Kotani H."/>
            <person name="Kato T."/>
            <person name="Asamizu E."/>
            <person name="Miyajima N."/>
            <person name="Sasamoto S."/>
            <person name="Kimura T."/>
            <person name="Hosouchi T."/>
            <person name="Kawashima K."/>
            <person name="Kohara M."/>
            <person name="Matsumoto M."/>
            <person name="Matsuno A."/>
            <person name="Muraki A."/>
            <person name="Nakayama S."/>
            <person name="Nakazaki N."/>
            <person name="Naruo K."/>
            <person name="Okumura S."/>
            <person name="Shinpo S."/>
            <person name="Takeuchi C."/>
            <person name="Wada T."/>
            <person name="Watanabe A."/>
            <person name="Yamada M."/>
            <person name="Yasuda M."/>
            <person name="Sato S."/>
            <person name="de la Bastide M."/>
            <person name="Huang E."/>
            <person name="Spiegel L."/>
            <person name="Gnoj L."/>
            <person name="O'Shaughnessy A."/>
            <person name="Preston R."/>
            <person name="Habermann K."/>
            <person name="Murray J."/>
            <person name="Johnson D."/>
            <person name="Rohlfing T."/>
            <person name="Nelson J."/>
            <person name="Stoneking T."/>
            <person name="Pepin K."/>
            <person name="Spieth J."/>
            <person name="Sekhon M."/>
            <person name="Armstrong J."/>
            <person name="Becker M."/>
            <person name="Belter E."/>
            <person name="Cordum H."/>
            <person name="Cordes M."/>
            <person name="Courtney L."/>
            <person name="Courtney W."/>
            <person name="Dante M."/>
            <person name="Du H."/>
            <person name="Edwards J."/>
            <person name="Fryman J."/>
            <person name="Haakensen B."/>
            <person name="Lamar E."/>
            <person name="Latreille P."/>
            <person name="Leonard S."/>
            <person name="Meyer R."/>
            <person name="Mulvaney E."/>
            <person name="Ozersky P."/>
            <person name="Riley A."/>
            <person name="Strowmatt C."/>
            <person name="Wagner-McPherson C."/>
            <person name="Wollam A."/>
            <person name="Yoakum M."/>
            <person name="Bell M."/>
            <person name="Dedhia N."/>
            <person name="Parnell L."/>
            <person name="Shah R."/>
            <person name="Rodriguez M."/>
            <person name="Hoon See L."/>
            <person name="Vil D."/>
            <person name="Baker J."/>
            <person name="Kirchoff K."/>
            <person name="Toth K."/>
            <person name="King L."/>
            <person name="Bahret A."/>
            <person name="Miller B."/>
            <person name="Marra M.A."/>
            <person name="Martienssen R."/>
            <person name="McCombie W.R."/>
            <person name="Wilson R.K."/>
            <person name="Murphy G."/>
            <person name="Bancroft I."/>
            <person name="Volckaert G."/>
            <person name="Wambutt R."/>
            <person name="Duesterhoeft A."/>
            <person name="Stiekema W."/>
            <person name="Pohl T."/>
            <person name="Entian K.-D."/>
            <person name="Terryn N."/>
            <person name="Hartley N."/>
            <person name="Bent E."/>
            <person name="Johnson S."/>
            <person name="Langham S.-A."/>
            <person name="McCullagh B."/>
            <person name="Robben J."/>
            <person name="Grymonprez B."/>
            <person name="Zimmermann W."/>
            <person name="Ramsperger U."/>
            <person name="Wedler H."/>
            <person name="Balke K."/>
            <person name="Wedler E."/>
            <person name="Peters S."/>
            <person name="van Staveren M."/>
            <person name="Dirkse W."/>
            <person name="Mooijman P."/>
            <person name="Klein Lankhorst R."/>
            <person name="Weitzenegger T."/>
            <person name="Bothe G."/>
            <person name="Rose M."/>
            <person name="Hauf J."/>
            <person name="Berneiser S."/>
            <person name="Hempel S."/>
            <person name="Feldpausch M."/>
            <person name="Lamberth S."/>
            <person name="Villarroel R."/>
            <person name="Gielen J."/>
            <person name="Ardiles W."/>
            <person name="Bents O."/>
            <person name="Lemcke K."/>
            <person name="Kolesov G."/>
            <person name="Mayer K.F.X."/>
            <person name="Rudd S."/>
            <person name="Schoof H."/>
            <person name="Schueller C."/>
            <person name="Zaccaria P."/>
            <person name="Mewes H.-W."/>
            <person name="Bevan M."/>
            <person name="Fransz P.F."/>
        </authorList>
    </citation>
    <scope>NUCLEOTIDE SEQUENCE [LARGE SCALE GENOMIC DNA]</scope>
    <source>
        <strain>cv. Columbia</strain>
    </source>
</reference>
<reference key="2">
    <citation type="journal article" date="2017" name="Plant J.">
        <title>Araport11: a complete reannotation of the Arabidopsis thaliana reference genome.</title>
        <authorList>
            <person name="Cheng C.Y."/>
            <person name="Krishnakumar V."/>
            <person name="Chan A.P."/>
            <person name="Thibaud-Nissen F."/>
            <person name="Schobel S."/>
            <person name="Town C.D."/>
        </authorList>
    </citation>
    <scope>GENOME REANNOTATION</scope>
    <source>
        <strain>cv. Columbia</strain>
    </source>
</reference>
<reference key="3">
    <citation type="journal article" date="2002" name="Science">
        <title>Functional annotation of a full-length Arabidopsis cDNA collection.</title>
        <authorList>
            <person name="Seki M."/>
            <person name="Narusaka M."/>
            <person name="Kamiya A."/>
            <person name="Ishida J."/>
            <person name="Satou M."/>
            <person name="Sakurai T."/>
            <person name="Nakajima M."/>
            <person name="Enju A."/>
            <person name="Akiyama K."/>
            <person name="Oono Y."/>
            <person name="Muramatsu M."/>
            <person name="Hayashizaki Y."/>
            <person name="Kawai J."/>
            <person name="Carninci P."/>
            <person name="Itoh M."/>
            <person name="Ishii Y."/>
            <person name="Arakawa T."/>
            <person name="Shibata K."/>
            <person name="Shinagawa A."/>
            <person name="Shinozaki K."/>
        </authorList>
    </citation>
    <scope>NUCLEOTIDE SEQUENCE [LARGE SCALE MRNA]</scope>
    <source>
        <strain>cv. Columbia</strain>
    </source>
</reference>
<reference key="4">
    <citation type="journal article" date="2003" name="Science">
        <title>Empirical analysis of transcriptional activity in the Arabidopsis genome.</title>
        <authorList>
            <person name="Yamada K."/>
            <person name="Lim J."/>
            <person name="Dale J.M."/>
            <person name="Chen H."/>
            <person name="Shinn P."/>
            <person name="Palm C.J."/>
            <person name="Southwick A.M."/>
            <person name="Wu H.C."/>
            <person name="Kim C.J."/>
            <person name="Nguyen M."/>
            <person name="Pham P.K."/>
            <person name="Cheuk R.F."/>
            <person name="Karlin-Newmann G."/>
            <person name="Liu S.X."/>
            <person name="Lam B."/>
            <person name="Sakano H."/>
            <person name="Wu T."/>
            <person name="Yu G."/>
            <person name="Miranda M."/>
            <person name="Quach H.L."/>
            <person name="Tripp M."/>
            <person name="Chang C.H."/>
            <person name="Lee J.M."/>
            <person name="Toriumi M.J."/>
            <person name="Chan M.M."/>
            <person name="Tang C.C."/>
            <person name="Onodera C.S."/>
            <person name="Deng J.M."/>
            <person name="Akiyama K."/>
            <person name="Ansari Y."/>
            <person name="Arakawa T."/>
            <person name="Banh J."/>
            <person name="Banno F."/>
            <person name="Bowser L."/>
            <person name="Brooks S.Y."/>
            <person name="Carninci P."/>
            <person name="Chao Q."/>
            <person name="Choy N."/>
            <person name="Enju A."/>
            <person name="Goldsmith A.D."/>
            <person name="Gurjal M."/>
            <person name="Hansen N.F."/>
            <person name="Hayashizaki Y."/>
            <person name="Johnson-Hopson C."/>
            <person name="Hsuan V.W."/>
            <person name="Iida K."/>
            <person name="Karnes M."/>
            <person name="Khan S."/>
            <person name="Koesema E."/>
            <person name="Ishida J."/>
            <person name="Jiang P.X."/>
            <person name="Jones T."/>
            <person name="Kawai J."/>
            <person name="Kamiya A."/>
            <person name="Meyers C."/>
            <person name="Nakajima M."/>
            <person name="Narusaka M."/>
            <person name="Seki M."/>
            <person name="Sakurai T."/>
            <person name="Satou M."/>
            <person name="Tamse R."/>
            <person name="Vaysberg M."/>
            <person name="Wallender E.K."/>
            <person name="Wong C."/>
            <person name="Yamamura Y."/>
            <person name="Yuan S."/>
            <person name="Shinozaki K."/>
            <person name="Davis R.W."/>
            <person name="Theologis A."/>
            <person name="Ecker J.R."/>
        </authorList>
    </citation>
    <scope>NUCLEOTIDE SEQUENCE [LARGE SCALE MRNA]</scope>
    <source>
        <strain>cv. Columbia</strain>
    </source>
</reference>
<reference key="5">
    <citation type="journal article" date="2008" name="BMC Genomics">
        <title>Genome-wide analysis of CCCH zinc finger family in Arabidopsis and rice.</title>
        <authorList>
            <person name="Wang D."/>
            <person name="Guo Y."/>
            <person name="Wu C."/>
            <person name="Yang G."/>
            <person name="Li Y."/>
            <person name="Zheng C."/>
        </authorList>
    </citation>
    <scope>NOMENCLATURE</scope>
</reference>
<organism>
    <name type="scientific">Arabidopsis thaliana</name>
    <name type="common">Mouse-ear cress</name>
    <dbReference type="NCBI Taxonomy" id="3702"/>
    <lineage>
        <taxon>Eukaryota</taxon>
        <taxon>Viridiplantae</taxon>
        <taxon>Streptophyta</taxon>
        <taxon>Embryophyta</taxon>
        <taxon>Tracheophyta</taxon>
        <taxon>Spermatophyta</taxon>
        <taxon>Magnoliopsida</taxon>
        <taxon>eudicotyledons</taxon>
        <taxon>Gunneridae</taxon>
        <taxon>Pentapetalae</taxon>
        <taxon>rosids</taxon>
        <taxon>malvids</taxon>
        <taxon>Brassicales</taxon>
        <taxon>Brassicaceae</taxon>
        <taxon>Camelineae</taxon>
        <taxon>Arabidopsis</taxon>
    </lineage>
</organism>
<proteinExistence type="evidence at transcript level"/>
<keyword id="KW-0238">DNA-binding</keyword>
<keyword id="KW-0479">Metal-binding</keyword>
<keyword id="KW-1185">Reference proteome</keyword>
<keyword id="KW-0694">RNA-binding</keyword>
<keyword id="KW-0862">Zinc</keyword>
<keyword id="KW-0863">Zinc-finger</keyword>
<name>C3H55_ARATH</name>
<comment type="sequence caution" evidence="4">
    <conflict type="erroneous gene model prediction">
        <sequence resource="EMBL-CDS" id="CAC42905"/>
    </conflict>
</comment>
<accession>Q94CJ8</accession>
<accession>Q8GS07</accession>
<sequence>MDSGDATSLLLTKIRSLEPDYAPKIIGYLLLHDFGDRDLMHLARGPESILQSTISKVKSLLGIFSNNSPSSTPTSPSPLNPICRPPLNGRGSSHSNGFMDFRRNSPSSPSSTSPWSFNNCINGNNGNNPHISPKHTPISKPFSSHQSNGLSATHSGSADAAGGADLLDDQQLNDCLSFLDDSCSKTEDLVDPSIPLDYSVDGDGETHLHRRSFSCDASFVSGDDGFGGGCKPCVYFSRGLCKNGESCKFIHGGYPDNMDGNGIVADSPRKMENFVRQHEEMMRLKLAYQQQRLASQILGRAPQLPYEKRMDFLLQQHAQRDGGLPFGDERFWSSSPGRLERMELAMHLGDQSNSASRQIYLTFPADSTFKDEDVATYFSLFGTVQDVRIPYQQKRMFGFVSFAHPETVKVVLARGNPHFICDSRVLVKPYKEKGKVLDKKQQQLLQQQIERGNYSPCSSPSGIDPREQSDFHLGSKMLYERREMMRRKIEQADLLRAIELERRRFINLQLPEFKNSVTLNHHRSFSVGSPGYFSSAGNQSPDFQSELNGADALKVTDDTLELHPYPVVNPMSVNNSYSNGAKEETNKSELLDPDSGSTIELVLPSNLFPSASSTDDHKTDDSAETNAKVGVSSTNENDHEPPVTTNNLMQ</sequence>
<evidence type="ECO:0000255" key="1">
    <source>
        <dbReference type="PROSITE-ProRule" id="PRU00176"/>
    </source>
</evidence>
<evidence type="ECO:0000255" key="2">
    <source>
        <dbReference type="PROSITE-ProRule" id="PRU00723"/>
    </source>
</evidence>
<evidence type="ECO:0000256" key="3">
    <source>
        <dbReference type="SAM" id="MobiDB-lite"/>
    </source>
</evidence>
<evidence type="ECO:0000305" key="4"/>